<sequence length="156" mass="16245">MKLNDLRDKPGSVKARKRVGRGIGSGTGKTGGRGVKGQKSRSGVSINGFEGGQMPIYRRLPKRGFTNIFAKSFNVVSLGRIQAAIDAGKLDAKAVVNLDSLKAAGVIRRAKDGVRILSDGELKAKVAFEVAGASKAAVEKIEKAGGSIKLPEAAAE</sequence>
<gene>
    <name evidence="1" type="primary">rplO</name>
    <name type="ordered locus">BSUIS_A1263</name>
</gene>
<name>RL15_BRUSI</name>
<accession>B0CH13</accession>
<organism>
    <name type="scientific">Brucella suis (strain ATCC 23445 / NCTC 10510)</name>
    <dbReference type="NCBI Taxonomy" id="470137"/>
    <lineage>
        <taxon>Bacteria</taxon>
        <taxon>Pseudomonadati</taxon>
        <taxon>Pseudomonadota</taxon>
        <taxon>Alphaproteobacteria</taxon>
        <taxon>Hyphomicrobiales</taxon>
        <taxon>Brucellaceae</taxon>
        <taxon>Brucella/Ochrobactrum group</taxon>
        <taxon>Brucella</taxon>
    </lineage>
</organism>
<dbReference type="EMBL" id="CP000911">
    <property type="protein sequence ID" value="ABY38314.1"/>
    <property type="molecule type" value="Genomic_DNA"/>
</dbReference>
<dbReference type="RefSeq" id="WP_002964343.1">
    <property type="nucleotide sequence ID" value="NC_010169.1"/>
</dbReference>
<dbReference type="SMR" id="B0CH13"/>
<dbReference type="GeneID" id="97533543"/>
<dbReference type="KEGG" id="bmt:BSUIS_A1263"/>
<dbReference type="HOGENOM" id="CLU_055188_4_0_5"/>
<dbReference type="Proteomes" id="UP000008545">
    <property type="component" value="Chromosome I"/>
</dbReference>
<dbReference type="GO" id="GO:0022625">
    <property type="term" value="C:cytosolic large ribosomal subunit"/>
    <property type="evidence" value="ECO:0007669"/>
    <property type="project" value="TreeGrafter"/>
</dbReference>
<dbReference type="GO" id="GO:0019843">
    <property type="term" value="F:rRNA binding"/>
    <property type="evidence" value="ECO:0007669"/>
    <property type="project" value="UniProtKB-UniRule"/>
</dbReference>
<dbReference type="GO" id="GO:0003735">
    <property type="term" value="F:structural constituent of ribosome"/>
    <property type="evidence" value="ECO:0007669"/>
    <property type="project" value="InterPro"/>
</dbReference>
<dbReference type="GO" id="GO:0006412">
    <property type="term" value="P:translation"/>
    <property type="evidence" value="ECO:0007669"/>
    <property type="project" value="UniProtKB-UniRule"/>
</dbReference>
<dbReference type="Gene3D" id="3.100.10.10">
    <property type="match status" value="1"/>
</dbReference>
<dbReference type="HAMAP" id="MF_01341">
    <property type="entry name" value="Ribosomal_uL15"/>
    <property type="match status" value="1"/>
</dbReference>
<dbReference type="InterPro" id="IPR030878">
    <property type="entry name" value="Ribosomal_uL15"/>
</dbReference>
<dbReference type="InterPro" id="IPR021131">
    <property type="entry name" value="Ribosomal_uL15/eL18"/>
</dbReference>
<dbReference type="InterPro" id="IPR036227">
    <property type="entry name" value="Ribosomal_uL15/eL18_sf"/>
</dbReference>
<dbReference type="InterPro" id="IPR005749">
    <property type="entry name" value="Ribosomal_uL15_bac-type"/>
</dbReference>
<dbReference type="InterPro" id="IPR001196">
    <property type="entry name" value="Ribosomal_uL15_CS"/>
</dbReference>
<dbReference type="NCBIfam" id="TIGR01071">
    <property type="entry name" value="rplO_bact"/>
    <property type="match status" value="1"/>
</dbReference>
<dbReference type="PANTHER" id="PTHR12934">
    <property type="entry name" value="50S RIBOSOMAL PROTEIN L15"/>
    <property type="match status" value="1"/>
</dbReference>
<dbReference type="PANTHER" id="PTHR12934:SF11">
    <property type="entry name" value="LARGE RIBOSOMAL SUBUNIT PROTEIN UL15M"/>
    <property type="match status" value="1"/>
</dbReference>
<dbReference type="Pfam" id="PF00828">
    <property type="entry name" value="Ribosomal_L27A"/>
    <property type="match status" value="1"/>
</dbReference>
<dbReference type="SUPFAM" id="SSF52080">
    <property type="entry name" value="Ribosomal proteins L15p and L18e"/>
    <property type="match status" value="1"/>
</dbReference>
<dbReference type="PROSITE" id="PS00475">
    <property type="entry name" value="RIBOSOMAL_L15"/>
    <property type="match status" value="1"/>
</dbReference>
<protein>
    <recommendedName>
        <fullName evidence="1">Large ribosomal subunit protein uL15</fullName>
    </recommendedName>
    <alternativeName>
        <fullName evidence="3">50S ribosomal protein L15</fullName>
    </alternativeName>
</protein>
<comment type="function">
    <text evidence="1">Binds to the 23S rRNA.</text>
</comment>
<comment type="subunit">
    <text evidence="1">Part of the 50S ribosomal subunit.</text>
</comment>
<comment type="similarity">
    <text evidence="1">Belongs to the universal ribosomal protein uL15 family.</text>
</comment>
<reference key="1">
    <citation type="submission" date="2007-12" db="EMBL/GenBank/DDBJ databases">
        <title>Brucella suis ATCC 23445 whole genome shotgun sequencing project.</title>
        <authorList>
            <person name="Setubal J.C."/>
            <person name="Bowns C."/>
            <person name="Boyle S."/>
            <person name="Crasta O.R."/>
            <person name="Czar M.J."/>
            <person name="Dharmanolla C."/>
            <person name="Gillespie J.J."/>
            <person name="Kenyon R.W."/>
            <person name="Lu J."/>
            <person name="Mane S."/>
            <person name="Mohapatra S."/>
            <person name="Nagrani S."/>
            <person name="Purkayastha A."/>
            <person name="Rajasimha H.K."/>
            <person name="Shallom J.M."/>
            <person name="Shallom S."/>
            <person name="Shukla M."/>
            <person name="Snyder E.E."/>
            <person name="Sobral B.W."/>
            <person name="Wattam A.R."/>
            <person name="Will R."/>
            <person name="Williams K."/>
            <person name="Yoo H."/>
            <person name="Bruce D."/>
            <person name="Detter C."/>
            <person name="Munk C."/>
            <person name="Brettin T.S."/>
        </authorList>
    </citation>
    <scope>NUCLEOTIDE SEQUENCE [LARGE SCALE GENOMIC DNA]</scope>
    <source>
        <strain>ATCC 23445 / NCTC 10510</strain>
    </source>
</reference>
<evidence type="ECO:0000255" key="1">
    <source>
        <dbReference type="HAMAP-Rule" id="MF_01341"/>
    </source>
</evidence>
<evidence type="ECO:0000256" key="2">
    <source>
        <dbReference type="SAM" id="MobiDB-lite"/>
    </source>
</evidence>
<evidence type="ECO:0000305" key="3"/>
<proteinExistence type="inferred from homology"/>
<feature type="chain" id="PRO_1000086702" description="Large ribosomal subunit protein uL15">
    <location>
        <begin position="1"/>
        <end position="156"/>
    </location>
</feature>
<feature type="region of interest" description="Disordered" evidence="2">
    <location>
        <begin position="1"/>
        <end position="44"/>
    </location>
</feature>
<feature type="compositionally biased region" description="Basic and acidic residues" evidence="2">
    <location>
        <begin position="1"/>
        <end position="11"/>
    </location>
</feature>
<feature type="compositionally biased region" description="Gly residues" evidence="2">
    <location>
        <begin position="21"/>
        <end position="35"/>
    </location>
</feature>
<keyword id="KW-0687">Ribonucleoprotein</keyword>
<keyword id="KW-0689">Ribosomal protein</keyword>
<keyword id="KW-0694">RNA-binding</keyword>
<keyword id="KW-0699">rRNA-binding</keyword>